<feature type="chain" id="PRO_0000323649" description="DNA-directed RNA polymerase subunit alpha">
    <location>
        <begin position="1"/>
        <end position="335"/>
    </location>
</feature>
<feature type="region of interest" description="Alpha N-terminal domain (alpha-NTD)" evidence="1">
    <location>
        <begin position="1"/>
        <end position="233"/>
    </location>
</feature>
<feature type="region of interest" description="Alpha C-terminal domain (alpha-CTD)" evidence="1">
    <location>
        <begin position="247"/>
        <end position="335"/>
    </location>
</feature>
<protein>
    <recommendedName>
        <fullName evidence="1">DNA-directed RNA polymerase subunit alpha</fullName>
        <shortName evidence="1">RNAP subunit alpha</shortName>
        <ecNumber evidence="1">2.7.7.6</ecNumber>
    </recommendedName>
    <alternativeName>
        <fullName evidence="1">RNA polymerase subunit alpha</fullName>
    </alternativeName>
    <alternativeName>
        <fullName evidence="1">Transcriptase subunit alpha</fullName>
    </alternativeName>
</protein>
<name>RPOA_PSYWF</name>
<reference key="1">
    <citation type="submission" date="2007-05" db="EMBL/GenBank/DDBJ databases">
        <title>Complete sequence of chromosome of Psychrobacter sp. PRwf-1.</title>
        <authorList>
            <consortium name="US DOE Joint Genome Institute"/>
            <person name="Copeland A."/>
            <person name="Lucas S."/>
            <person name="Lapidus A."/>
            <person name="Barry K."/>
            <person name="Detter J.C."/>
            <person name="Glavina del Rio T."/>
            <person name="Hammon N."/>
            <person name="Israni S."/>
            <person name="Dalin E."/>
            <person name="Tice H."/>
            <person name="Pitluck S."/>
            <person name="Chain P."/>
            <person name="Malfatti S."/>
            <person name="Shin M."/>
            <person name="Vergez L."/>
            <person name="Schmutz J."/>
            <person name="Larimer F."/>
            <person name="Land M."/>
            <person name="Hauser L."/>
            <person name="Kyrpides N."/>
            <person name="Kim E."/>
            <person name="Tiedje J."/>
            <person name="Richardson P."/>
        </authorList>
    </citation>
    <scope>NUCLEOTIDE SEQUENCE [LARGE SCALE GENOMIC DNA]</scope>
    <source>
        <strain>PRwf-1</strain>
    </source>
</reference>
<organism>
    <name type="scientific">Psychrobacter sp. (strain PRwf-1)</name>
    <dbReference type="NCBI Taxonomy" id="349106"/>
    <lineage>
        <taxon>Bacteria</taxon>
        <taxon>Pseudomonadati</taxon>
        <taxon>Pseudomonadota</taxon>
        <taxon>Gammaproteobacteria</taxon>
        <taxon>Moraxellales</taxon>
        <taxon>Moraxellaceae</taxon>
        <taxon>Psychrobacter</taxon>
    </lineage>
</organism>
<evidence type="ECO:0000255" key="1">
    <source>
        <dbReference type="HAMAP-Rule" id="MF_00059"/>
    </source>
</evidence>
<sequence>MMLNATEFLTPNAINVDAVDETNAKVTLEPLERGFGHTLGNALRRILLSSLPGAAVIEAEIEGVDHEYSTLEGLQEDVLDLLLNLKGLAITMHDQNEVFLTLDKKGPGIITAADIELPHNVDIVNPELVLGTLGDRGHLKMRLRVVMGRGYEPANLRREDGDTKAIGRLKLDASFSPVSRVAYQVENARVEQRTDLDRLIIELETNGTIDPEEAIRKAATILQQQISIFVDLEAEEAPEPVKEKEEVDPVLLRPVDDLELTVRSANCLKAENIYYIGDLVQRSETELLKTPNLGKKSLTEIKDVLASKGLELDMRLENWPPADLRVDDRFSYRSR</sequence>
<comment type="function">
    <text evidence="1">DNA-dependent RNA polymerase catalyzes the transcription of DNA into RNA using the four ribonucleoside triphosphates as substrates.</text>
</comment>
<comment type="catalytic activity">
    <reaction evidence="1">
        <text>RNA(n) + a ribonucleoside 5'-triphosphate = RNA(n+1) + diphosphate</text>
        <dbReference type="Rhea" id="RHEA:21248"/>
        <dbReference type="Rhea" id="RHEA-COMP:14527"/>
        <dbReference type="Rhea" id="RHEA-COMP:17342"/>
        <dbReference type="ChEBI" id="CHEBI:33019"/>
        <dbReference type="ChEBI" id="CHEBI:61557"/>
        <dbReference type="ChEBI" id="CHEBI:140395"/>
        <dbReference type="EC" id="2.7.7.6"/>
    </reaction>
</comment>
<comment type="subunit">
    <text evidence="1">Homodimer. The RNAP catalytic core consists of 2 alpha, 1 beta, 1 beta' and 1 omega subunit. When a sigma factor is associated with the core the holoenzyme is formed, which can initiate transcription.</text>
</comment>
<comment type="domain">
    <text evidence="1">The N-terminal domain is essential for RNAP assembly and basal transcription, whereas the C-terminal domain is involved in interaction with transcriptional regulators and with upstream promoter elements.</text>
</comment>
<comment type="similarity">
    <text evidence="1">Belongs to the RNA polymerase alpha chain family.</text>
</comment>
<proteinExistence type="inferred from homology"/>
<accession>A5WCL4</accession>
<gene>
    <name evidence="1" type="primary">rpoA</name>
    <name type="ordered locus">PsycPRwf_0450</name>
</gene>
<dbReference type="EC" id="2.7.7.6" evidence="1"/>
<dbReference type="EMBL" id="CP000713">
    <property type="protein sequence ID" value="ABQ93405.1"/>
    <property type="molecule type" value="Genomic_DNA"/>
</dbReference>
<dbReference type="SMR" id="A5WCL4"/>
<dbReference type="STRING" id="349106.PsycPRwf_0450"/>
<dbReference type="KEGG" id="prw:PsycPRwf_0450"/>
<dbReference type="eggNOG" id="COG0202">
    <property type="taxonomic scope" value="Bacteria"/>
</dbReference>
<dbReference type="HOGENOM" id="CLU_053084_0_1_6"/>
<dbReference type="GO" id="GO:0005737">
    <property type="term" value="C:cytoplasm"/>
    <property type="evidence" value="ECO:0007669"/>
    <property type="project" value="UniProtKB-ARBA"/>
</dbReference>
<dbReference type="GO" id="GO:0000428">
    <property type="term" value="C:DNA-directed RNA polymerase complex"/>
    <property type="evidence" value="ECO:0007669"/>
    <property type="project" value="UniProtKB-KW"/>
</dbReference>
<dbReference type="GO" id="GO:0003677">
    <property type="term" value="F:DNA binding"/>
    <property type="evidence" value="ECO:0007669"/>
    <property type="project" value="UniProtKB-UniRule"/>
</dbReference>
<dbReference type="GO" id="GO:0003899">
    <property type="term" value="F:DNA-directed RNA polymerase activity"/>
    <property type="evidence" value="ECO:0007669"/>
    <property type="project" value="UniProtKB-UniRule"/>
</dbReference>
<dbReference type="GO" id="GO:0046983">
    <property type="term" value="F:protein dimerization activity"/>
    <property type="evidence" value="ECO:0007669"/>
    <property type="project" value="InterPro"/>
</dbReference>
<dbReference type="GO" id="GO:0006351">
    <property type="term" value="P:DNA-templated transcription"/>
    <property type="evidence" value="ECO:0007669"/>
    <property type="project" value="UniProtKB-UniRule"/>
</dbReference>
<dbReference type="CDD" id="cd06928">
    <property type="entry name" value="RNAP_alpha_NTD"/>
    <property type="match status" value="1"/>
</dbReference>
<dbReference type="FunFam" id="1.10.150.20:FF:000001">
    <property type="entry name" value="DNA-directed RNA polymerase subunit alpha"/>
    <property type="match status" value="1"/>
</dbReference>
<dbReference type="FunFam" id="2.170.120.12:FF:000001">
    <property type="entry name" value="DNA-directed RNA polymerase subunit alpha"/>
    <property type="match status" value="1"/>
</dbReference>
<dbReference type="Gene3D" id="1.10.150.20">
    <property type="entry name" value="5' to 3' exonuclease, C-terminal subdomain"/>
    <property type="match status" value="1"/>
</dbReference>
<dbReference type="Gene3D" id="2.170.120.12">
    <property type="entry name" value="DNA-directed RNA polymerase, insert domain"/>
    <property type="match status" value="1"/>
</dbReference>
<dbReference type="Gene3D" id="3.30.1360.10">
    <property type="entry name" value="RNA polymerase, RBP11-like subunit"/>
    <property type="match status" value="1"/>
</dbReference>
<dbReference type="HAMAP" id="MF_00059">
    <property type="entry name" value="RNApol_bact_RpoA"/>
    <property type="match status" value="1"/>
</dbReference>
<dbReference type="InterPro" id="IPR011262">
    <property type="entry name" value="DNA-dir_RNA_pol_insert"/>
</dbReference>
<dbReference type="InterPro" id="IPR011263">
    <property type="entry name" value="DNA-dir_RNA_pol_RpoA/D/Rpb3"/>
</dbReference>
<dbReference type="InterPro" id="IPR011773">
    <property type="entry name" value="DNA-dir_RpoA"/>
</dbReference>
<dbReference type="InterPro" id="IPR036603">
    <property type="entry name" value="RBP11-like"/>
</dbReference>
<dbReference type="InterPro" id="IPR011260">
    <property type="entry name" value="RNAP_asu_C"/>
</dbReference>
<dbReference type="InterPro" id="IPR036643">
    <property type="entry name" value="RNApol_insert_sf"/>
</dbReference>
<dbReference type="NCBIfam" id="NF003513">
    <property type="entry name" value="PRK05182.1-2"/>
    <property type="match status" value="1"/>
</dbReference>
<dbReference type="NCBIfam" id="NF003519">
    <property type="entry name" value="PRK05182.2-5"/>
    <property type="match status" value="1"/>
</dbReference>
<dbReference type="NCBIfam" id="TIGR02027">
    <property type="entry name" value="rpoA"/>
    <property type="match status" value="1"/>
</dbReference>
<dbReference type="Pfam" id="PF01000">
    <property type="entry name" value="RNA_pol_A_bac"/>
    <property type="match status" value="1"/>
</dbReference>
<dbReference type="Pfam" id="PF03118">
    <property type="entry name" value="RNA_pol_A_CTD"/>
    <property type="match status" value="1"/>
</dbReference>
<dbReference type="Pfam" id="PF01193">
    <property type="entry name" value="RNA_pol_L"/>
    <property type="match status" value="1"/>
</dbReference>
<dbReference type="SMART" id="SM00662">
    <property type="entry name" value="RPOLD"/>
    <property type="match status" value="1"/>
</dbReference>
<dbReference type="SUPFAM" id="SSF47789">
    <property type="entry name" value="C-terminal domain of RNA polymerase alpha subunit"/>
    <property type="match status" value="1"/>
</dbReference>
<dbReference type="SUPFAM" id="SSF56553">
    <property type="entry name" value="Insert subdomain of RNA polymerase alpha subunit"/>
    <property type="match status" value="1"/>
</dbReference>
<dbReference type="SUPFAM" id="SSF55257">
    <property type="entry name" value="RBP11-like subunits of RNA polymerase"/>
    <property type="match status" value="1"/>
</dbReference>
<keyword id="KW-0240">DNA-directed RNA polymerase</keyword>
<keyword id="KW-0548">Nucleotidyltransferase</keyword>
<keyword id="KW-0804">Transcription</keyword>
<keyword id="KW-0808">Transferase</keyword>